<name>VMA21_PICGU</name>
<sequence>MSLILIRSVVRKLVFFTAAMIIFPVFTFFVVQYLSDNALVSGGIAALAANVVLIGYVVAAFTEDTAALEKKEQ</sequence>
<feature type="chain" id="PRO_0000377594" description="Vacuolar ATPase assembly integral membrane protein VMA21">
    <location>
        <begin position="1"/>
        <end position="73"/>
    </location>
</feature>
<feature type="topological domain" description="Cytoplasmic" evidence="1">
    <location>
        <begin position="1"/>
        <end position="12"/>
    </location>
</feature>
<feature type="transmembrane region" description="Helical" evidence="1">
    <location>
        <begin position="13"/>
        <end position="33"/>
    </location>
</feature>
<feature type="topological domain" description="Lumenal" evidence="1">
    <location>
        <begin position="34"/>
        <end position="37"/>
    </location>
</feature>
<feature type="transmembrane region" description="Helical" evidence="1">
    <location>
        <begin position="38"/>
        <end position="58"/>
    </location>
</feature>
<feature type="topological domain" description="Cytoplasmic" evidence="1">
    <location>
        <begin position="59"/>
        <end position="73"/>
    </location>
</feature>
<feature type="short sequence motif" description="Prevents secretion from ER">
    <location>
        <begin position="70"/>
        <end position="73"/>
    </location>
</feature>
<evidence type="ECO:0000255" key="1">
    <source>
        <dbReference type="HAMAP-Rule" id="MF_03058"/>
    </source>
</evidence>
<reference key="1">
    <citation type="journal article" date="2009" name="Nature">
        <title>Evolution of pathogenicity and sexual reproduction in eight Candida genomes.</title>
        <authorList>
            <person name="Butler G."/>
            <person name="Rasmussen M.D."/>
            <person name="Lin M.F."/>
            <person name="Santos M.A.S."/>
            <person name="Sakthikumar S."/>
            <person name="Munro C.A."/>
            <person name="Rheinbay E."/>
            <person name="Grabherr M."/>
            <person name="Forche A."/>
            <person name="Reedy J.L."/>
            <person name="Agrafioti I."/>
            <person name="Arnaud M.B."/>
            <person name="Bates S."/>
            <person name="Brown A.J.P."/>
            <person name="Brunke S."/>
            <person name="Costanzo M.C."/>
            <person name="Fitzpatrick D.A."/>
            <person name="de Groot P.W.J."/>
            <person name="Harris D."/>
            <person name="Hoyer L.L."/>
            <person name="Hube B."/>
            <person name="Klis F.M."/>
            <person name="Kodira C."/>
            <person name="Lennard N."/>
            <person name="Logue M.E."/>
            <person name="Martin R."/>
            <person name="Neiman A.M."/>
            <person name="Nikolaou E."/>
            <person name="Quail M.A."/>
            <person name="Quinn J."/>
            <person name="Santos M.C."/>
            <person name="Schmitzberger F.F."/>
            <person name="Sherlock G."/>
            <person name="Shah P."/>
            <person name="Silverstein K.A.T."/>
            <person name="Skrzypek M.S."/>
            <person name="Soll D."/>
            <person name="Staggs R."/>
            <person name="Stansfield I."/>
            <person name="Stumpf M.P.H."/>
            <person name="Sudbery P.E."/>
            <person name="Srikantha T."/>
            <person name="Zeng Q."/>
            <person name="Berman J."/>
            <person name="Berriman M."/>
            <person name="Heitman J."/>
            <person name="Gow N.A.R."/>
            <person name="Lorenz M.C."/>
            <person name="Birren B.W."/>
            <person name="Kellis M."/>
            <person name="Cuomo C.A."/>
        </authorList>
    </citation>
    <scope>NUCLEOTIDE SEQUENCE [LARGE SCALE GENOMIC DNA]</scope>
    <source>
        <strain>ATCC 6260 / CBS 566 / DSM 6381 / JCM 1539 / NBRC 10279 / NRRL Y-324</strain>
    </source>
</reference>
<gene>
    <name evidence="1" type="primary">VMA21</name>
    <name type="ORF">PGUG_02534</name>
</gene>
<organism>
    <name type="scientific">Meyerozyma guilliermondii (strain ATCC 6260 / CBS 566 / DSM 6381 / JCM 1539 / NBRC 10279 / NRRL Y-324)</name>
    <name type="common">Yeast</name>
    <name type="synonym">Candida guilliermondii</name>
    <dbReference type="NCBI Taxonomy" id="294746"/>
    <lineage>
        <taxon>Eukaryota</taxon>
        <taxon>Fungi</taxon>
        <taxon>Dikarya</taxon>
        <taxon>Ascomycota</taxon>
        <taxon>Saccharomycotina</taxon>
        <taxon>Pichiomycetes</taxon>
        <taxon>Debaryomycetaceae</taxon>
        <taxon>Meyerozyma</taxon>
    </lineage>
</organism>
<comment type="function">
    <text evidence="1">Required for the assembly of the V0 complex of the vacuolar ATPase (V-ATPase) in the endoplasmic reticulum.</text>
</comment>
<comment type="subcellular location">
    <subcellularLocation>
        <location evidence="1">Endoplasmic reticulum membrane</location>
        <topology evidence="1">Multi-pass membrane protein</topology>
    </subcellularLocation>
    <subcellularLocation>
        <location evidence="1">Endoplasmic reticulum-Golgi intermediate compartment membrane</location>
        <topology evidence="1">Multi-pass membrane protein</topology>
    </subcellularLocation>
    <subcellularLocation>
        <location evidence="1">Cytoplasmic vesicle</location>
        <location evidence="1">COPII-coated vesicle membrane</location>
        <topology evidence="1">Multi-pass membrane protein</topology>
    </subcellularLocation>
</comment>
<comment type="similarity">
    <text evidence="1">Belongs to the VMA21 family.</text>
</comment>
<protein>
    <recommendedName>
        <fullName evidence="1">Vacuolar ATPase assembly integral membrane protein VMA21</fullName>
    </recommendedName>
</protein>
<keyword id="KW-0968">Cytoplasmic vesicle</keyword>
<keyword id="KW-0256">Endoplasmic reticulum</keyword>
<keyword id="KW-0472">Membrane</keyword>
<keyword id="KW-1185">Reference proteome</keyword>
<keyword id="KW-0812">Transmembrane</keyword>
<keyword id="KW-1133">Transmembrane helix</keyword>
<accession>A5DGY3</accession>
<dbReference type="EMBL" id="CH408157">
    <property type="protein sequence ID" value="EDK38436.1"/>
    <property type="molecule type" value="Genomic_DNA"/>
</dbReference>
<dbReference type="RefSeq" id="XP_001484805.1">
    <property type="nucleotide sequence ID" value="XM_001484755.1"/>
</dbReference>
<dbReference type="SMR" id="A5DGY3"/>
<dbReference type="FunCoup" id="A5DGY3">
    <property type="interactions" value="51"/>
</dbReference>
<dbReference type="STRING" id="294746.A5DGY3"/>
<dbReference type="GeneID" id="5127088"/>
<dbReference type="KEGG" id="pgu:PGUG_02534"/>
<dbReference type="VEuPathDB" id="FungiDB:PGUG_02534"/>
<dbReference type="eggNOG" id="ENOG502SBNA">
    <property type="taxonomic scope" value="Eukaryota"/>
</dbReference>
<dbReference type="HOGENOM" id="CLU_154717_1_0_1"/>
<dbReference type="InParanoid" id="A5DGY3"/>
<dbReference type="OMA" id="VMAFMED"/>
<dbReference type="OrthoDB" id="160405at2759"/>
<dbReference type="Proteomes" id="UP000001997">
    <property type="component" value="Unassembled WGS sequence"/>
</dbReference>
<dbReference type="GO" id="GO:0005789">
    <property type="term" value="C:endoplasmic reticulum membrane"/>
    <property type="evidence" value="ECO:0007669"/>
    <property type="project" value="UniProtKB-SubCell"/>
</dbReference>
<dbReference type="GO" id="GO:0033116">
    <property type="term" value="C:endoplasmic reticulum-Golgi intermediate compartment membrane"/>
    <property type="evidence" value="ECO:0007669"/>
    <property type="project" value="UniProtKB-SubCell"/>
</dbReference>
<dbReference type="GO" id="GO:0012507">
    <property type="term" value="C:ER to Golgi transport vesicle membrane"/>
    <property type="evidence" value="ECO:0007669"/>
    <property type="project" value="UniProtKB-SubCell"/>
</dbReference>
<dbReference type="GO" id="GO:0070072">
    <property type="term" value="P:vacuolar proton-transporting V-type ATPase complex assembly"/>
    <property type="evidence" value="ECO:0007669"/>
    <property type="project" value="UniProtKB-UniRule"/>
</dbReference>
<dbReference type="HAMAP" id="MF_03058">
    <property type="entry name" value="VMA21"/>
    <property type="match status" value="1"/>
</dbReference>
<dbReference type="InterPro" id="IPR019013">
    <property type="entry name" value="Vma21"/>
</dbReference>
<dbReference type="Pfam" id="PF09446">
    <property type="entry name" value="VMA21"/>
    <property type="match status" value="1"/>
</dbReference>
<proteinExistence type="inferred from homology"/>